<keyword id="KW-0001">2Fe-2S</keyword>
<keyword id="KW-0004">4Fe-4S</keyword>
<keyword id="KW-0093">Biotin biosynthesis</keyword>
<keyword id="KW-0408">Iron</keyword>
<keyword id="KW-0411">Iron-sulfur</keyword>
<keyword id="KW-0479">Metal-binding</keyword>
<keyword id="KW-0949">S-adenosyl-L-methionine</keyword>
<keyword id="KW-0808">Transferase</keyword>
<proteinExistence type="inferred from homology"/>
<reference key="1">
    <citation type="journal article" date="2011" name="MBio">
        <title>Novel metabolic attributes of the genus Cyanothece, comprising a group of unicellular nitrogen-fixing Cyanobacteria.</title>
        <authorList>
            <person name="Bandyopadhyay A."/>
            <person name="Elvitigala T."/>
            <person name="Welsh E."/>
            <person name="Stockel J."/>
            <person name="Liberton M."/>
            <person name="Min H."/>
            <person name="Sherman L.A."/>
            <person name="Pakrasi H.B."/>
        </authorList>
    </citation>
    <scope>NUCLEOTIDE SEQUENCE [LARGE SCALE GENOMIC DNA]</scope>
    <source>
        <strain>PCC 7425 / ATCC 29141</strain>
    </source>
</reference>
<comment type="function">
    <text evidence="1">Catalyzes the conversion of dethiobiotin (DTB) to biotin by the insertion of a sulfur atom into dethiobiotin via a radical-based mechanism.</text>
</comment>
<comment type="catalytic activity">
    <reaction evidence="1">
        <text>(4R,5S)-dethiobiotin + (sulfur carrier)-SH + 2 reduced [2Fe-2S]-[ferredoxin] + 2 S-adenosyl-L-methionine = (sulfur carrier)-H + biotin + 2 5'-deoxyadenosine + 2 L-methionine + 2 oxidized [2Fe-2S]-[ferredoxin]</text>
        <dbReference type="Rhea" id="RHEA:22060"/>
        <dbReference type="Rhea" id="RHEA-COMP:10000"/>
        <dbReference type="Rhea" id="RHEA-COMP:10001"/>
        <dbReference type="Rhea" id="RHEA-COMP:14737"/>
        <dbReference type="Rhea" id="RHEA-COMP:14739"/>
        <dbReference type="ChEBI" id="CHEBI:17319"/>
        <dbReference type="ChEBI" id="CHEBI:29917"/>
        <dbReference type="ChEBI" id="CHEBI:33737"/>
        <dbReference type="ChEBI" id="CHEBI:33738"/>
        <dbReference type="ChEBI" id="CHEBI:57586"/>
        <dbReference type="ChEBI" id="CHEBI:57844"/>
        <dbReference type="ChEBI" id="CHEBI:59789"/>
        <dbReference type="ChEBI" id="CHEBI:64428"/>
        <dbReference type="ChEBI" id="CHEBI:149473"/>
        <dbReference type="EC" id="2.8.1.6"/>
    </reaction>
</comment>
<comment type="cofactor">
    <cofactor evidence="1">
        <name>[4Fe-4S] cluster</name>
        <dbReference type="ChEBI" id="CHEBI:49883"/>
    </cofactor>
    <text evidence="1">Binds 1 [4Fe-4S] cluster. The cluster is coordinated with 3 cysteines and an exchangeable S-adenosyl-L-methionine.</text>
</comment>
<comment type="cofactor">
    <cofactor evidence="1">
        <name>[2Fe-2S] cluster</name>
        <dbReference type="ChEBI" id="CHEBI:190135"/>
    </cofactor>
    <text evidence="1">Binds 1 [2Fe-2S] cluster. The cluster is coordinated with 3 cysteines and 1 arginine.</text>
</comment>
<comment type="pathway">
    <text evidence="1">Cofactor biosynthesis; biotin biosynthesis; biotin from 7,8-diaminononanoate: step 2/2.</text>
</comment>
<comment type="subunit">
    <text evidence="1">Homodimer.</text>
</comment>
<comment type="similarity">
    <text evidence="1">Belongs to the radical SAM superfamily. Biotin synthase family.</text>
</comment>
<comment type="sequence caution" evidence="3">
    <conflict type="erroneous initiation">
        <sequence resource="EMBL-CDS" id="ACL43901"/>
    </conflict>
</comment>
<gene>
    <name evidence="1" type="primary">bioB</name>
    <name type="ordered locus">Cyan7425_1531</name>
</gene>
<evidence type="ECO:0000255" key="1">
    <source>
        <dbReference type="HAMAP-Rule" id="MF_01694"/>
    </source>
</evidence>
<evidence type="ECO:0000255" key="2">
    <source>
        <dbReference type="PROSITE-ProRule" id="PRU01266"/>
    </source>
</evidence>
<evidence type="ECO:0000305" key="3"/>
<organism>
    <name type="scientific">Cyanothece sp. (strain PCC 7425 / ATCC 29141)</name>
    <dbReference type="NCBI Taxonomy" id="395961"/>
    <lineage>
        <taxon>Bacteria</taxon>
        <taxon>Bacillati</taxon>
        <taxon>Cyanobacteriota</taxon>
        <taxon>Cyanophyceae</taxon>
        <taxon>Gomontiellales</taxon>
        <taxon>Cyanothecaceae</taxon>
        <taxon>Cyanothece</taxon>
    </lineage>
</organism>
<protein>
    <recommendedName>
        <fullName evidence="1">Biotin synthase</fullName>
        <ecNumber evidence="1">2.8.1.6</ecNumber>
    </recommendedName>
</protein>
<dbReference type="EC" id="2.8.1.6" evidence="1"/>
<dbReference type="EMBL" id="CP001344">
    <property type="protein sequence ID" value="ACL43901.1"/>
    <property type="status" value="ALT_INIT"/>
    <property type="molecule type" value="Genomic_DNA"/>
</dbReference>
<dbReference type="SMR" id="B8HPP0"/>
<dbReference type="STRING" id="395961.Cyan7425_1531"/>
<dbReference type="KEGG" id="cyn:Cyan7425_1531"/>
<dbReference type="eggNOG" id="COG0502">
    <property type="taxonomic scope" value="Bacteria"/>
</dbReference>
<dbReference type="HOGENOM" id="CLU_033172_2_1_3"/>
<dbReference type="OrthoDB" id="9786826at2"/>
<dbReference type="UniPathway" id="UPA00078">
    <property type="reaction ID" value="UER00162"/>
</dbReference>
<dbReference type="GO" id="GO:0051537">
    <property type="term" value="F:2 iron, 2 sulfur cluster binding"/>
    <property type="evidence" value="ECO:0007669"/>
    <property type="project" value="UniProtKB-KW"/>
</dbReference>
<dbReference type="GO" id="GO:0051539">
    <property type="term" value="F:4 iron, 4 sulfur cluster binding"/>
    <property type="evidence" value="ECO:0007669"/>
    <property type="project" value="UniProtKB-KW"/>
</dbReference>
<dbReference type="GO" id="GO:0004076">
    <property type="term" value="F:biotin synthase activity"/>
    <property type="evidence" value="ECO:0007669"/>
    <property type="project" value="UniProtKB-UniRule"/>
</dbReference>
<dbReference type="GO" id="GO:0005506">
    <property type="term" value="F:iron ion binding"/>
    <property type="evidence" value="ECO:0007669"/>
    <property type="project" value="UniProtKB-UniRule"/>
</dbReference>
<dbReference type="GO" id="GO:0009102">
    <property type="term" value="P:biotin biosynthetic process"/>
    <property type="evidence" value="ECO:0007669"/>
    <property type="project" value="UniProtKB-UniRule"/>
</dbReference>
<dbReference type="CDD" id="cd01335">
    <property type="entry name" value="Radical_SAM"/>
    <property type="match status" value="1"/>
</dbReference>
<dbReference type="FunFam" id="3.20.20.70:FF:000026">
    <property type="entry name" value="Biotin synthase"/>
    <property type="match status" value="1"/>
</dbReference>
<dbReference type="Gene3D" id="3.20.20.70">
    <property type="entry name" value="Aldolase class I"/>
    <property type="match status" value="1"/>
</dbReference>
<dbReference type="HAMAP" id="MF_01694">
    <property type="entry name" value="BioB"/>
    <property type="match status" value="1"/>
</dbReference>
<dbReference type="InterPro" id="IPR013785">
    <property type="entry name" value="Aldolase_TIM"/>
</dbReference>
<dbReference type="InterPro" id="IPR010722">
    <property type="entry name" value="BATS_dom"/>
</dbReference>
<dbReference type="InterPro" id="IPR002684">
    <property type="entry name" value="Biotin_synth/BioAB"/>
</dbReference>
<dbReference type="InterPro" id="IPR024177">
    <property type="entry name" value="Biotin_synthase"/>
</dbReference>
<dbReference type="InterPro" id="IPR006638">
    <property type="entry name" value="Elp3/MiaA/NifB-like_rSAM"/>
</dbReference>
<dbReference type="InterPro" id="IPR007197">
    <property type="entry name" value="rSAM"/>
</dbReference>
<dbReference type="NCBIfam" id="TIGR00433">
    <property type="entry name" value="bioB"/>
    <property type="match status" value="1"/>
</dbReference>
<dbReference type="PANTHER" id="PTHR22976">
    <property type="entry name" value="BIOTIN SYNTHASE"/>
    <property type="match status" value="1"/>
</dbReference>
<dbReference type="PANTHER" id="PTHR22976:SF2">
    <property type="entry name" value="BIOTIN SYNTHASE, MITOCHONDRIAL"/>
    <property type="match status" value="1"/>
</dbReference>
<dbReference type="Pfam" id="PF06968">
    <property type="entry name" value="BATS"/>
    <property type="match status" value="1"/>
</dbReference>
<dbReference type="Pfam" id="PF04055">
    <property type="entry name" value="Radical_SAM"/>
    <property type="match status" value="1"/>
</dbReference>
<dbReference type="PIRSF" id="PIRSF001619">
    <property type="entry name" value="Biotin_synth"/>
    <property type="match status" value="1"/>
</dbReference>
<dbReference type="SFLD" id="SFLDG01060">
    <property type="entry name" value="BATS_domain_containing"/>
    <property type="match status" value="1"/>
</dbReference>
<dbReference type="SFLD" id="SFLDG01278">
    <property type="entry name" value="biotin_synthase_like"/>
    <property type="match status" value="1"/>
</dbReference>
<dbReference type="SMART" id="SM00876">
    <property type="entry name" value="BATS"/>
    <property type="match status" value="1"/>
</dbReference>
<dbReference type="SMART" id="SM00729">
    <property type="entry name" value="Elp3"/>
    <property type="match status" value="1"/>
</dbReference>
<dbReference type="SUPFAM" id="SSF102114">
    <property type="entry name" value="Radical SAM enzymes"/>
    <property type="match status" value="1"/>
</dbReference>
<dbReference type="PROSITE" id="PS51918">
    <property type="entry name" value="RADICAL_SAM"/>
    <property type="match status" value="1"/>
</dbReference>
<sequence length="372" mass="39943">MVATPLPPTQSPRHPSLQELSLSELQTWLDELAERIITGETLDRATAIALTEIEGEEKILALCAAADRVRQACCGNTVDLCSIVNIKSGNCSENCSFCAQSAHHPGQDSPIYGMKTPEDILAQARAAAAAGAKRFCLVSQGRGPKYNSPKSTEFEQILATVRAIIAETNIKPCCALGEVTPEQAQALKEAGVSRYNHNLESSENFFPEVATTHSWRDRVETIKTLKAAGIQACTGGILGLGESWQDRVDLALALRELEVESVPLNLLNPRAGTLLGEQSKLDPFTALKAIAIFRLILPQQIIRYAGGREAVMGELQALGLKAGINAMLVGHYLTTMGQPPEQDHAMLAGLGLQGGEAPIPGEYVRASQVREL</sequence>
<name>BIOB_CYAP4</name>
<accession>B8HPP0</accession>
<feature type="chain" id="PRO_0000381338" description="Biotin synthase">
    <location>
        <begin position="1"/>
        <end position="372"/>
    </location>
</feature>
<feature type="domain" description="Radical SAM core" evidence="2">
    <location>
        <begin position="73"/>
        <end position="308"/>
    </location>
</feature>
<feature type="binding site" evidence="1">
    <location>
        <position position="91"/>
    </location>
    <ligand>
        <name>[4Fe-4S] cluster</name>
        <dbReference type="ChEBI" id="CHEBI:49883"/>
        <note>4Fe-4S-S-AdoMet</note>
    </ligand>
</feature>
<feature type="binding site" evidence="1">
    <location>
        <position position="95"/>
    </location>
    <ligand>
        <name>[4Fe-4S] cluster</name>
        <dbReference type="ChEBI" id="CHEBI:49883"/>
        <note>4Fe-4S-S-AdoMet</note>
    </ligand>
</feature>
<feature type="binding site" evidence="1">
    <location>
        <position position="98"/>
    </location>
    <ligand>
        <name>[4Fe-4S] cluster</name>
        <dbReference type="ChEBI" id="CHEBI:49883"/>
        <note>4Fe-4S-S-AdoMet</note>
    </ligand>
</feature>
<feature type="binding site" evidence="1">
    <location>
        <position position="136"/>
    </location>
    <ligand>
        <name>[2Fe-2S] cluster</name>
        <dbReference type="ChEBI" id="CHEBI:190135"/>
    </ligand>
</feature>
<feature type="binding site" evidence="1">
    <location>
        <position position="173"/>
    </location>
    <ligand>
        <name>[2Fe-2S] cluster</name>
        <dbReference type="ChEBI" id="CHEBI:190135"/>
    </ligand>
</feature>
<feature type="binding site" evidence="1">
    <location>
        <position position="233"/>
    </location>
    <ligand>
        <name>[2Fe-2S] cluster</name>
        <dbReference type="ChEBI" id="CHEBI:190135"/>
    </ligand>
</feature>
<feature type="binding site" evidence="1">
    <location>
        <position position="303"/>
    </location>
    <ligand>
        <name>[2Fe-2S] cluster</name>
        <dbReference type="ChEBI" id="CHEBI:190135"/>
    </ligand>
</feature>